<protein>
    <recommendedName>
        <fullName>Granaticin polyketide synthase putative ketoacyl reductase 1</fullName>
        <ecNumber>1.3.1.-</ecNumber>
    </recommendedName>
    <alternativeName>
        <fullName>ORF5</fullName>
    </alternativeName>
</protein>
<comment type="pathway">
    <text>Antibiotic biosynthesis; granaticin biosynthesis.</text>
</comment>
<comment type="similarity">
    <text evidence="3">Belongs to the short-chain dehydrogenases/reductases (SDR) family.</text>
</comment>
<feature type="chain" id="PRO_0000054632" description="Granaticin polyketide synthase putative ketoacyl reductase 1">
    <location>
        <begin position="1"/>
        <end position="272"/>
    </location>
</feature>
<feature type="active site" description="Proton acceptor" evidence="2">
    <location>
        <position position="168"/>
    </location>
</feature>
<feature type="binding site" evidence="1">
    <location>
        <begin position="21"/>
        <end position="45"/>
    </location>
    <ligand>
        <name>NAD(+)</name>
        <dbReference type="ChEBI" id="CHEBI:57540"/>
    </ligand>
</feature>
<feature type="binding site" evidence="1">
    <location>
        <position position="155"/>
    </location>
    <ligand>
        <name>substrate</name>
    </ligand>
</feature>
<proteinExistence type="inferred from homology"/>
<gene>
    <name type="primary">gra-orf5</name>
</gene>
<name>DHK1_STRVN</name>
<organism>
    <name type="scientific">Streptomyces violaceoruber</name>
    <dbReference type="NCBI Taxonomy" id="1935"/>
    <lineage>
        <taxon>Bacteria</taxon>
        <taxon>Bacillati</taxon>
        <taxon>Actinomycetota</taxon>
        <taxon>Actinomycetes</taxon>
        <taxon>Kitasatosporales</taxon>
        <taxon>Streptomycetaceae</taxon>
        <taxon>Streptomyces</taxon>
        <taxon>Streptomyces violaceoruber group</taxon>
    </lineage>
</organism>
<accession>P16542</accession>
<reference key="1">
    <citation type="journal article" date="1989" name="EMBO J.">
        <title>Structure and deduced function of the granaticin-producing polyketide synthase gene cluster of Streptomyces violaceoruber Tu22.</title>
        <authorList>
            <person name="Sherman D.H."/>
            <person name="Malpartida F."/>
            <person name="Bibb M.J."/>
            <person name="Kieser H.M."/>
            <person name="Bibb M.J."/>
            <person name="Hopwood D.A."/>
        </authorList>
    </citation>
    <scope>NUCLEOTIDE SEQUENCE [GENOMIC DNA]</scope>
    <source>
        <strain>Tu22</strain>
    </source>
</reference>
<reference key="2">
    <citation type="journal article" date="1995" name="Mol. Gen. Genet.">
        <title>Identification of Streptomyces violaceoruber Tu22 genes involved in the biosynthesis of granaticin.</title>
        <authorList>
            <person name="Bechthold A."/>
            <person name="Sohng J.K."/>
            <person name="Smith T.M."/>
            <person name="Chu X."/>
            <person name="Floss H.G."/>
        </authorList>
    </citation>
    <scope>NUCLEOTIDE SEQUENCE [GENOMIC DNA]</scope>
    <source>
        <strain>Tu22</strain>
    </source>
</reference>
<reference key="3">
    <citation type="journal article" date="1998" name="Chem. Biol.">
        <title>The granaticin biosynthetic gene cluster of Streptomyces violaceoruber Tu22: sequence analysis and expression in a heterologous host.</title>
        <authorList>
            <person name="Ichinose K."/>
            <person name="Bedford D.J."/>
            <person name="Tornus D."/>
            <person name="Bechthold A."/>
            <person name="Bibb M.J."/>
            <person name="Revill W.P."/>
            <person name="Floss H.G."/>
            <person name="Hopwood D.A."/>
        </authorList>
    </citation>
    <scope>NUCLEOTIDE SEQUENCE [GENOMIC DNA]</scope>
    <source>
        <strain>Tu22</strain>
    </source>
</reference>
<sequence length="272" mass="28393">MTTATATATATPGTAAKPVALVTGATSGIGLAIARRLAALGARTFLCARDEERLAQTVKELRGEGFDVDGTVCDVADPAQIRAYVAAAVQRYGTVDILVNNAGRSGGGATAEIADELWLDVITTNLTSVFLMTKEVLNAGGMLAKKRGRIINIASTGGKQGVVHAVPYSASKHGVVGLTKALGLELARTGITVNAVCPGFVETPMAERVREHYAGIWQVSEEETFDRITNRVPLGRYVETREVAAMVEYLVADDAAAVTAQALNVCGGLGNY</sequence>
<dbReference type="EC" id="1.3.1.-"/>
<dbReference type="EMBL" id="X16300">
    <property type="protein sequence ID" value="CAA34368.1"/>
    <property type="molecule type" value="Genomic_DNA"/>
</dbReference>
<dbReference type="EMBL" id="X16144">
    <property type="protein sequence ID" value="CAA34263.1"/>
    <property type="molecule type" value="Genomic_DNA"/>
</dbReference>
<dbReference type="EMBL" id="AJ011500">
    <property type="protein sequence ID" value="CAA09652.1"/>
    <property type="molecule type" value="Genomic_DNA"/>
</dbReference>
<dbReference type="PIR" id="S05397">
    <property type="entry name" value="S05397"/>
</dbReference>
<dbReference type="SMR" id="P16542"/>
<dbReference type="UniPathway" id="UPA00175"/>
<dbReference type="GO" id="GO:0016491">
    <property type="term" value="F:oxidoreductase activity"/>
    <property type="evidence" value="ECO:0007669"/>
    <property type="project" value="UniProtKB-KW"/>
</dbReference>
<dbReference type="GO" id="GO:0017000">
    <property type="term" value="P:antibiotic biosynthetic process"/>
    <property type="evidence" value="ECO:0007669"/>
    <property type="project" value="UniProtKB-KW"/>
</dbReference>
<dbReference type="GO" id="GO:0006629">
    <property type="term" value="P:lipid metabolic process"/>
    <property type="evidence" value="ECO:0007669"/>
    <property type="project" value="UniProtKB-ARBA"/>
</dbReference>
<dbReference type="GO" id="GO:0032787">
    <property type="term" value="P:monocarboxylic acid metabolic process"/>
    <property type="evidence" value="ECO:0007669"/>
    <property type="project" value="UniProtKB-ARBA"/>
</dbReference>
<dbReference type="FunFam" id="3.40.50.720:FF:000084">
    <property type="entry name" value="Short-chain dehydrogenase reductase"/>
    <property type="match status" value="1"/>
</dbReference>
<dbReference type="Gene3D" id="3.40.50.720">
    <property type="entry name" value="NAD(P)-binding Rossmann-like Domain"/>
    <property type="match status" value="1"/>
</dbReference>
<dbReference type="InterPro" id="IPR036291">
    <property type="entry name" value="NAD(P)-bd_dom_sf"/>
</dbReference>
<dbReference type="InterPro" id="IPR020904">
    <property type="entry name" value="Sc_DH/Rdtase_CS"/>
</dbReference>
<dbReference type="InterPro" id="IPR050259">
    <property type="entry name" value="SDR"/>
</dbReference>
<dbReference type="InterPro" id="IPR002347">
    <property type="entry name" value="SDR_fam"/>
</dbReference>
<dbReference type="PANTHER" id="PTHR42879">
    <property type="entry name" value="3-OXOACYL-(ACYL-CARRIER-PROTEIN) REDUCTASE"/>
    <property type="match status" value="1"/>
</dbReference>
<dbReference type="PANTHER" id="PTHR42879:SF2">
    <property type="entry name" value="3-OXOACYL-[ACYL-CARRIER-PROTEIN] REDUCTASE FABG"/>
    <property type="match status" value="1"/>
</dbReference>
<dbReference type="Pfam" id="PF00106">
    <property type="entry name" value="adh_short"/>
    <property type="match status" value="1"/>
</dbReference>
<dbReference type="PRINTS" id="PR00081">
    <property type="entry name" value="GDHRDH"/>
</dbReference>
<dbReference type="PRINTS" id="PR00080">
    <property type="entry name" value="SDRFAMILY"/>
</dbReference>
<dbReference type="SUPFAM" id="SSF51735">
    <property type="entry name" value="NAD(P)-binding Rossmann-fold domains"/>
    <property type="match status" value="1"/>
</dbReference>
<dbReference type="PROSITE" id="PS00061">
    <property type="entry name" value="ADH_SHORT"/>
    <property type="match status" value="1"/>
</dbReference>
<keyword id="KW-0045">Antibiotic biosynthesis</keyword>
<keyword id="KW-0520">NAD</keyword>
<keyword id="KW-0560">Oxidoreductase</keyword>
<evidence type="ECO:0000250" key="1"/>
<evidence type="ECO:0000255" key="2">
    <source>
        <dbReference type="PROSITE-ProRule" id="PRU10001"/>
    </source>
</evidence>
<evidence type="ECO:0000305" key="3"/>